<protein>
    <recommendedName>
        <fullName>Rap guanine nucleotide exchange factor 1</fullName>
    </recommendedName>
    <alternativeName>
        <fullName>CRK SH3-binding GNRP</fullName>
    </alternativeName>
    <alternativeName>
        <fullName>Guanine nucleotide-releasing factor 2</fullName>
    </alternativeName>
    <alternativeName>
        <fullName>Protein C3G</fullName>
    </alternativeName>
</protein>
<proteinExistence type="evidence at protein level"/>
<accession>Q13905</accession>
<accession>Q5JUE4</accession>
<accession>Q68DL3</accession>
<accession>Q8IV73</accession>
<name>RPGF1_HUMAN</name>
<comment type="function">
    <text evidence="4 6 7 9">Guanine nucleotide-releasing protein that binds to SH3 domain of CRK and GRB2/ASH. Transduces signals from CRK to activate RAS. Involved in cell branching and adhesion mediated by BCAR1-CRK-RAPGEF1 signaling and activation of RAP1 (PubMed:12432078). Plays a role in the establishment of basal endothelial barrier function. Plays a role in nerve growth factor (NGF)-induced sustained activation of Rap1 and neurite outgrowth.</text>
</comment>
<comment type="subunit">
    <text evidence="5 10">Interacts with HCK (via SH3-binding sites) (PubMed:14551197). Interacts with CRK (via SH3-binding sites) (PubMed:8662907).</text>
</comment>
<comment type="interaction">
    <interactant intactId="EBI-976876">
        <id>Q13905</id>
    </interactant>
    <interactant intactId="EBI-375543">
        <id>P00519</id>
        <label>ABL1</label>
    </interactant>
    <organismsDiffer>false</organismsDiffer>
    <experiments>4</experiments>
</comment>
<comment type="interaction">
    <interactant intactId="EBI-976876">
        <id>Q13905</id>
    </interactant>
    <interactant intactId="EBI-886">
        <id>P46108</id>
        <label>CRK</label>
    </interactant>
    <organismsDiffer>false</organismsDiffer>
    <experiments>6</experiments>
</comment>
<comment type="interaction">
    <interactant intactId="EBI-976876">
        <id>Q13905</id>
    </interactant>
    <interactant intactId="EBI-287556">
        <id>P46108-1</id>
        <label>CRK</label>
    </interactant>
    <organismsDiffer>false</organismsDiffer>
    <experiments>3</experiments>
</comment>
<comment type="interaction">
    <interactant intactId="EBI-976876">
        <id>Q13905</id>
    </interactant>
    <interactant intactId="EBI-910">
        <id>P46109</id>
        <label>CRKL</label>
    </interactant>
    <organismsDiffer>false</organismsDiffer>
    <experiments>4</experiments>
</comment>
<comment type="interaction">
    <interactant intactId="EBI-976876">
        <id>Q13905</id>
    </interactant>
    <interactant intactId="EBI-515315">
        <id>P06241</id>
        <label>FYN</label>
    </interactant>
    <organismsDiffer>false</organismsDiffer>
    <experiments>2</experiments>
</comment>
<comment type="interaction">
    <interactant intactId="EBI-976876">
        <id>Q13905</id>
    </interactant>
    <interactant intactId="EBI-389883">
        <id>P16333</id>
        <label>NCK1</label>
    </interactant>
    <organismsDiffer>false</organismsDiffer>
    <experiments>2</experiments>
</comment>
<comment type="interaction">
    <interactant intactId="EBI-976876">
        <id>Q13905</id>
    </interactant>
    <interactant intactId="EBI-79464">
        <id>P27986</id>
        <label>PIK3R1</label>
    </interactant>
    <organismsDiffer>false</organismsDiffer>
    <experiments>2</experiments>
</comment>
<comment type="interaction">
    <interactant intactId="EBI-976876">
        <id>Q13905</id>
    </interactant>
    <interactant intactId="EBI-621482">
        <id>P12931</id>
        <label>SRC</label>
    </interactant>
    <organismsDiffer>false</organismsDiffer>
    <experiments>2</experiments>
</comment>
<comment type="subcellular location">
    <subcellularLocation>
        <location evidence="6">Early endosome</location>
    </subcellularLocation>
</comment>
<comment type="alternative products">
    <event type="alternative splicing"/>
    <isoform>
        <id>Q13905-1</id>
        <name>Long</name>
        <sequence type="displayed"/>
    </isoform>
    <isoform>
        <id>Q13905-2</id>
        <name>Short</name>
        <sequence type="described" ref="VSP_001822"/>
    </isoform>
    <isoform>
        <id>Q13905-3</id>
        <name>3</name>
        <sequence type="described" ref="VSP_042052"/>
    </isoform>
    <isoform>
        <id>Q13905-4</id>
        <name>4</name>
        <sequence type="described" ref="VSP_057416"/>
    </isoform>
</comment>
<comment type="tissue specificity">
    <text>Ubiquitously expressed in adult and fetus. Expression is high in adult skeletal muscle and placenta and in fetal brain and heart. Low levels of expression in adult and fetal liver.</text>
</comment>
<comment type="PTM">
    <text evidence="5">Phosphorylation at Tyr-504 enhances activity as Rap guanine nucleotide exchange factor.</text>
</comment>
<comment type="online information" name="Atlas of Genetics and Cytogenetics in Oncology and Haematology">
    <link uri="https://atlasgeneticsoncology.org/gene/42045/RAPGEF1"/>
</comment>
<feature type="chain" id="PRO_0000068864" description="Rap guanine nucleotide exchange factor 1">
    <location>
        <begin position="1"/>
        <end position="1077"/>
    </location>
</feature>
<feature type="domain" description="N-terminal Ras-GEF" evidence="1">
    <location>
        <begin position="688"/>
        <end position="810"/>
    </location>
</feature>
<feature type="domain" description="Ras-GEF" evidence="2">
    <location>
        <begin position="840"/>
        <end position="1064"/>
    </location>
</feature>
<feature type="region of interest" description="Disordered" evidence="3">
    <location>
        <begin position="207"/>
        <end position="235"/>
    </location>
</feature>
<feature type="region of interest" description="Disordered" evidence="3">
    <location>
        <begin position="248"/>
        <end position="300"/>
    </location>
</feature>
<feature type="region of interest" description="Disordered" evidence="3">
    <location>
        <begin position="336"/>
        <end position="376"/>
    </location>
</feature>
<feature type="region of interest" description="Disordered" evidence="3">
    <location>
        <begin position="411"/>
        <end position="494"/>
    </location>
</feature>
<feature type="region of interest" description="Disordered" evidence="3">
    <location>
        <begin position="600"/>
        <end position="670"/>
    </location>
</feature>
<feature type="short sequence motif" description="SH3-binding">
    <location>
        <begin position="281"/>
        <end position="292"/>
    </location>
</feature>
<feature type="short sequence motif" description="SH3-binding">
    <location>
        <begin position="451"/>
        <end position="462"/>
    </location>
</feature>
<feature type="short sequence motif" description="SH3-binding">
    <location>
        <begin position="538"/>
        <end position="549"/>
    </location>
</feature>
<feature type="short sequence motif" description="SH3-binding">
    <location>
        <begin position="606"/>
        <end position="617"/>
    </location>
</feature>
<feature type="compositionally biased region" description="Low complexity" evidence="3">
    <location>
        <begin position="213"/>
        <end position="228"/>
    </location>
</feature>
<feature type="compositionally biased region" description="Basic and acidic residues" evidence="3">
    <location>
        <begin position="358"/>
        <end position="371"/>
    </location>
</feature>
<feature type="compositionally biased region" description="Polar residues" evidence="3">
    <location>
        <begin position="484"/>
        <end position="494"/>
    </location>
</feature>
<feature type="compositionally biased region" description="Basic and acidic residues" evidence="3">
    <location>
        <begin position="640"/>
        <end position="651"/>
    </location>
</feature>
<feature type="compositionally biased region" description="Acidic residues" evidence="3">
    <location>
        <begin position="660"/>
        <end position="669"/>
    </location>
</feature>
<feature type="modified residue" description="Phosphoserine" evidence="16">
    <location>
        <position position="281"/>
    </location>
</feature>
<feature type="modified residue" description="Phosphoserine" evidence="15">
    <location>
        <position position="293"/>
    </location>
</feature>
<feature type="modified residue" description="Phosphoserine" evidence="16">
    <location>
        <position position="314"/>
    </location>
</feature>
<feature type="modified residue" description="Phosphoserine" evidence="16">
    <location>
        <position position="335"/>
    </location>
</feature>
<feature type="modified residue" description="Phosphoserine" evidence="14 16">
    <location>
        <position position="360"/>
    </location>
</feature>
<feature type="modified residue" description="Phosphotyrosine; by HCK" evidence="5">
    <location>
        <position position="504"/>
    </location>
</feature>
<feature type="splice variant" id="VSP_042052" description="In isoform 3." evidence="11">
    <original>MDT</original>
    <variation>MGNAIEKQKPLKRSHLYPWKQ</variation>
    <location>
        <begin position="1"/>
        <end position="3"/>
    </location>
</feature>
<feature type="splice variant" id="VSP_057416" description="In isoform 4." evidence="12">
    <original>MDT</original>
    <variation>MSGGLGLRRSPEMSGKIEKA</variation>
    <location>
        <begin position="1"/>
        <end position="3"/>
    </location>
</feature>
<feature type="splice variant" id="VSP_001822" description="In isoform Short." evidence="13">
    <location>
        <begin position="50"/>
        <end position="88"/>
    </location>
</feature>
<feature type="sequence variant" id="VAR_069375" description="Found in a patient with intellectual disability, frontal epilepsy and mild facial dysmorphism." evidence="8">
    <original>R</original>
    <variation>Q</variation>
    <location>
        <position position="1012"/>
    </location>
</feature>
<feature type="mutagenesis site" description="Abolishes phosphorylation by HCK." evidence="5">
    <original>Y</original>
    <variation>F</variation>
    <location>
        <position position="504"/>
    </location>
</feature>
<feature type="sequence conflict" description="In Ref. 2." evidence="13" ref="2">
    <original>P</original>
    <variation>R</variation>
    <location>
        <position position="137"/>
    </location>
</feature>
<feature type="sequence conflict" description="In Ref. 2." evidence="13" ref="2">
    <original>E</original>
    <variation>G</variation>
    <location>
        <position position="183"/>
    </location>
</feature>
<feature type="sequence conflict" description="In Ref. 2." evidence="13" ref="2">
    <original>S</original>
    <variation>C</variation>
    <location>
        <position position="217"/>
    </location>
</feature>
<feature type="sequence conflict" description="In Ref. 2." evidence="13" ref="2">
    <original>T</original>
    <variation>S</variation>
    <location>
        <position position="254"/>
    </location>
</feature>
<feature type="sequence conflict" description="In Ref. 1; BAA04770." evidence="13" ref="1">
    <original>P</original>
    <variation>T</variation>
    <location>
        <position position="287"/>
    </location>
</feature>
<feature type="sequence conflict" description="In Ref. 1; BAA04770." evidence="13" ref="1">
    <original>G</original>
    <variation>D</variation>
    <location>
        <position position="355"/>
    </location>
</feature>
<feature type="sequence conflict" description="In Ref. 2." evidence="13" ref="2">
    <original>G</original>
    <variation>V</variation>
    <location>
        <position position="636"/>
    </location>
</feature>
<feature type="sequence conflict" description="In Ref. 2." evidence="13" ref="2">
    <original>D</original>
    <variation>N</variation>
    <location>
        <position position="698"/>
    </location>
</feature>
<feature type="sequence conflict" description="In Ref. 2." evidence="13" ref="2">
    <original>EQ</original>
    <variation>DE</variation>
    <location>
        <begin position="846"/>
        <end position="847"/>
    </location>
</feature>
<feature type="cross-link" description="Glycyl lysine isopeptide (Lys-Gly) (interchain with G-Cter in SUMO2)" evidence="17">
    <location sequence="Q13905-2">
        <position position="57"/>
    </location>
</feature>
<organism>
    <name type="scientific">Homo sapiens</name>
    <name type="common">Human</name>
    <dbReference type="NCBI Taxonomy" id="9606"/>
    <lineage>
        <taxon>Eukaryota</taxon>
        <taxon>Metazoa</taxon>
        <taxon>Chordata</taxon>
        <taxon>Craniata</taxon>
        <taxon>Vertebrata</taxon>
        <taxon>Euteleostomi</taxon>
        <taxon>Mammalia</taxon>
        <taxon>Eutheria</taxon>
        <taxon>Euarchontoglires</taxon>
        <taxon>Primates</taxon>
        <taxon>Haplorrhini</taxon>
        <taxon>Catarrhini</taxon>
        <taxon>Hominidae</taxon>
        <taxon>Homo</taxon>
    </lineage>
</organism>
<dbReference type="EMBL" id="D21239">
    <property type="protein sequence ID" value="BAA04770.1"/>
    <property type="molecule type" value="mRNA"/>
</dbReference>
<dbReference type="EMBL" id="CR749354">
    <property type="protein sequence ID" value="CAH18207.1"/>
    <property type="molecule type" value="mRNA"/>
</dbReference>
<dbReference type="EMBL" id="AL160271">
    <property type="status" value="NOT_ANNOTATED_CDS"/>
    <property type="molecule type" value="Genomic_DNA"/>
</dbReference>
<dbReference type="EMBL" id="AL160276">
    <property type="status" value="NOT_ANNOTATED_CDS"/>
    <property type="molecule type" value="Genomic_DNA"/>
</dbReference>
<dbReference type="EMBL" id="BC041710">
    <property type="protein sequence ID" value="AAH41710.1"/>
    <property type="molecule type" value="mRNA"/>
</dbReference>
<dbReference type="CCDS" id="CCDS48047.1">
    <molecule id="Q13905-1"/>
</dbReference>
<dbReference type="CCDS" id="CCDS48048.1">
    <molecule id="Q13905-3"/>
</dbReference>
<dbReference type="CCDS" id="CCDS78450.1">
    <molecule id="Q13905-4"/>
</dbReference>
<dbReference type="RefSeq" id="NP_001291204.1">
    <molecule id="Q13905-4"/>
    <property type="nucleotide sequence ID" value="NM_001304275.2"/>
</dbReference>
<dbReference type="RefSeq" id="NP_005303.2">
    <molecule id="Q13905-1"/>
    <property type="nucleotide sequence ID" value="NM_005312.3"/>
</dbReference>
<dbReference type="RefSeq" id="NP_941372.1">
    <molecule id="Q13905-3"/>
    <property type="nucleotide sequence ID" value="NM_198679.2"/>
</dbReference>
<dbReference type="PDB" id="5L23">
    <property type="method" value="X-ray"/>
    <property type="resolution" value="1.77 A"/>
    <property type="chains" value="B=279-293"/>
</dbReference>
<dbReference type="PDBsum" id="5L23"/>
<dbReference type="SMR" id="Q13905"/>
<dbReference type="BioGRID" id="109146">
    <property type="interactions" value="35"/>
</dbReference>
<dbReference type="CORUM" id="Q13905"/>
<dbReference type="DIP" id="DIP-29392N"/>
<dbReference type="ELM" id="Q13905"/>
<dbReference type="FunCoup" id="Q13905">
    <property type="interactions" value="2794"/>
</dbReference>
<dbReference type="IntAct" id="Q13905">
    <property type="interactions" value="22"/>
</dbReference>
<dbReference type="MINT" id="Q13905"/>
<dbReference type="STRING" id="9606.ENSP00000361264"/>
<dbReference type="GlyGen" id="Q13905">
    <property type="glycosylation" value="1 site, 1 N-linked glycan (1 site)"/>
</dbReference>
<dbReference type="iPTMnet" id="Q13905"/>
<dbReference type="PhosphoSitePlus" id="Q13905"/>
<dbReference type="BioMuta" id="RAPGEF1"/>
<dbReference type="DMDM" id="143811452"/>
<dbReference type="jPOST" id="Q13905"/>
<dbReference type="MassIVE" id="Q13905"/>
<dbReference type="PaxDb" id="9606-ENSP00000361263"/>
<dbReference type="PeptideAtlas" id="Q13905"/>
<dbReference type="ProteomicsDB" id="59720">
    <molecule id="Q13905-1"/>
</dbReference>
<dbReference type="ProteomicsDB" id="59721">
    <molecule id="Q13905-2"/>
</dbReference>
<dbReference type="ProteomicsDB" id="59722">
    <molecule id="Q13905-3"/>
</dbReference>
<dbReference type="ProteomicsDB" id="66090"/>
<dbReference type="Pumba" id="Q13905"/>
<dbReference type="Antibodypedia" id="1488">
    <property type="antibodies" value="308 antibodies from 27 providers"/>
</dbReference>
<dbReference type="DNASU" id="2889"/>
<dbReference type="Ensembl" id="ENST00000372189.7">
    <molecule id="Q13905-1"/>
    <property type="protein sequence ID" value="ENSP00000361263.2"/>
    <property type="gene ID" value="ENSG00000107263.19"/>
</dbReference>
<dbReference type="Ensembl" id="ENST00000372190.8">
    <molecule id="Q13905-3"/>
    <property type="protein sequence ID" value="ENSP00000361264.3"/>
    <property type="gene ID" value="ENSG00000107263.19"/>
</dbReference>
<dbReference type="Ensembl" id="ENST00000372195.5">
    <molecule id="Q13905-4"/>
    <property type="protein sequence ID" value="ENSP00000361269.1"/>
    <property type="gene ID" value="ENSG00000107263.19"/>
</dbReference>
<dbReference type="GeneID" id="2889"/>
<dbReference type="KEGG" id="hsa:2889"/>
<dbReference type="UCSC" id="uc064wrk.1">
    <molecule id="Q13905-1"/>
    <property type="organism name" value="human"/>
</dbReference>
<dbReference type="UCSC" id="uc064wrl.1">
    <property type="organism name" value="human"/>
</dbReference>
<dbReference type="AGR" id="HGNC:4568"/>
<dbReference type="CTD" id="2889"/>
<dbReference type="DisGeNET" id="2889"/>
<dbReference type="GeneCards" id="RAPGEF1"/>
<dbReference type="HGNC" id="HGNC:4568">
    <property type="gene designation" value="RAPGEF1"/>
</dbReference>
<dbReference type="HPA" id="ENSG00000107263">
    <property type="expression patterns" value="Tissue enhanced (skeletal)"/>
</dbReference>
<dbReference type="MIM" id="600303">
    <property type="type" value="gene"/>
</dbReference>
<dbReference type="neXtProt" id="NX_Q13905"/>
<dbReference type="OpenTargets" id="ENSG00000107263"/>
<dbReference type="PharmGKB" id="PA28964"/>
<dbReference type="VEuPathDB" id="HostDB:ENSG00000107263"/>
<dbReference type="eggNOG" id="KOG3417">
    <property type="taxonomic scope" value="Eukaryota"/>
</dbReference>
<dbReference type="GeneTree" id="ENSGT00940000156235"/>
<dbReference type="HOGENOM" id="CLU_003982_1_0_1"/>
<dbReference type="InParanoid" id="Q13905"/>
<dbReference type="OMA" id="INRQEDF"/>
<dbReference type="OrthoDB" id="25179at2759"/>
<dbReference type="PAN-GO" id="Q13905">
    <property type="GO annotations" value="4 GO annotations based on evolutionary models"/>
</dbReference>
<dbReference type="PhylomeDB" id="Q13905"/>
<dbReference type="TreeFam" id="TF317296"/>
<dbReference type="PathwayCommons" id="Q13905"/>
<dbReference type="Reactome" id="R-HSA-170968">
    <property type="pathway name" value="Frs2-mediated activation"/>
</dbReference>
<dbReference type="Reactome" id="R-HSA-186763">
    <property type="pathway name" value="Downstream signal transduction"/>
</dbReference>
<dbReference type="Reactome" id="R-HSA-8875555">
    <property type="pathway name" value="MET activates RAP1 and RAC1"/>
</dbReference>
<dbReference type="Reactome" id="R-HSA-9013423">
    <property type="pathway name" value="RAC3 GTPase cycle"/>
</dbReference>
<dbReference type="Reactome" id="R-HSA-9027284">
    <property type="pathway name" value="Erythropoietin activates RAS"/>
</dbReference>
<dbReference type="Reactome" id="R-HSA-912631">
    <property type="pathway name" value="Regulation of signaling by CBL"/>
</dbReference>
<dbReference type="SignaLink" id="Q13905"/>
<dbReference type="SIGNOR" id="Q13905"/>
<dbReference type="BioGRID-ORCS" id="2889">
    <property type="hits" value="65 hits in 1159 CRISPR screens"/>
</dbReference>
<dbReference type="CD-CODE" id="804901D1">
    <property type="entry name" value="Nuclear speckle"/>
</dbReference>
<dbReference type="ChiTaRS" id="RAPGEF1">
    <property type="organism name" value="human"/>
</dbReference>
<dbReference type="GeneWiki" id="RAPGEF1"/>
<dbReference type="GenomeRNAi" id="2889"/>
<dbReference type="Pharos" id="Q13905">
    <property type="development level" value="Tbio"/>
</dbReference>
<dbReference type="PRO" id="PR:Q13905"/>
<dbReference type="Proteomes" id="UP000005640">
    <property type="component" value="Chromosome 9"/>
</dbReference>
<dbReference type="RNAct" id="Q13905">
    <property type="molecule type" value="protein"/>
</dbReference>
<dbReference type="Bgee" id="ENSG00000107263">
    <property type="expression patterns" value="Expressed in gastrocnemius and 170 other cell types or tissues"/>
</dbReference>
<dbReference type="ExpressionAtlas" id="Q13905">
    <property type="expression patterns" value="baseline and differential"/>
</dbReference>
<dbReference type="GO" id="GO:0005737">
    <property type="term" value="C:cytoplasm"/>
    <property type="evidence" value="ECO:0000314"/>
    <property type="project" value="CAFA"/>
</dbReference>
<dbReference type="GO" id="GO:0005829">
    <property type="term" value="C:cytosol"/>
    <property type="evidence" value="ECO:0000304"/>
    <property type="project" value="Reactome"/>
</dbReference>
<dbReference type="GO" id="GO:0005769">
    <property type="term" value="C:early endosome"/>
    <property type="evidence" value="ECO:0000314"/>
    <property type="project" value="UniProtKB"/>
</dbReference>
<dbReference type="GO" id="GO:0043231">
    <property type="term" value="C:intracellular membrane-bounded organelle"/>
    <property type="evidence" value="ECO:0000314"/>
    <property type="project" value="HPA"/>
</dbReference>
<dbReference type="GO" id="GO:0005886">
    <property type="term" value="C:plasma membrane"/>
    <property type="evidence" value="ECO:0000318"/>
    <property type="project" value="GO_Central"/>
</dbReference>
<dbReference type="GO" id="GO:0005085">
    <property type="term" value="F:guanyl-nucleotide exchange factor activity"/>
    <property type="evidence" value="ECO:0000314"/>
    <property type="project" value="UniProtKB"/>
</dbReference>
<dbReference type="GO" id="GO:0017124">
    <property type="term" value="F:SH3 domain binding"/>
    <property type="evidence" value="ECO:0007669"/>
    <property type="project" value="UniProtKB-KW"/>
</dbReference>
<dbReference type="GO" id="GO:0007169">
    <property type="term" value="P:cell surface receptor protein tyrosine kinase signaling pathway"/>
    <property type="evidence" value="ECO:0000304"/>
    <property type="project" value="ProtInc"/>
</dbReference>
<dbReference type="GO" id="GO:0071320">
    <property type="term" value="P:cellular response to cAMP"/>
    <property type="evidence" value="ECO:0000314"/>
    <property type="project" value="UniProtKB"/>
</dbReference>
<dbReference type="GO" id="GO:1990090">
    <property type="term" value="P:cellular response to nerve growth factor stimulus"/>
    <property type="evidence" value="ECO:0000314"/>
    <property type="project" value="UniProtKB"/>
</dbReference>
<dbReference type="GO" id="GO:0061028">
    <property type="term" value="P:establishment of endothelial barrier"/>
    <property type="evidence" value="ECO:0000315"/>
    <property type="project" value="UniProtKB"/>
</dbReference>
<dbReference type="GO" id="GO:0038180">
    <property type="term" value="P:nerve growth factor signaling pathway"/>
    <property type="evidence" value="ECO:0000314"/>
    <property type="project" value="UniProtKB"/>
</dbReference>
<dbReference type="GO" id="GO:0007399">
    <property type="term" value="P:nervous system development"/>
    <property type="evidence" value="ECO:0007669"/>
    <property type="project" value="UniProtKB-KW"/>
</dbReference>
<dbReference type="GO" id="GO:0043547">
    <property type="term" value="P:positive regulation of GTPase activity"/>
    <property type="evidence" value="ECO:0000314"/>
    <property type="project" value="UniProtKB"/>
</dbReference>
<dbReference type="GO" id="GO:0010976">
    <property type="term" value="P:positive regulation of neuron projection development"/>
    <property type="evidence" value="ECO:0000315"/>
    <property type="project" value="UniProtKB"/>
</dbReference>
<dbReference type="GO" id="GO:0032486">
    <property type="term" value="P:Rap protein signal transduction"/>
    <property type="evidence" value="ECO:0000315"/>
    <property type="project" value="UniProtKB"/>
</dbReference>
<dbReference type="GO" id="GO:0007265">
    <property type="term" value="P:Ras protein signal transduction"/>
    <property type="evidence" value="ECO:0000318"/>
    <property type="project" value="GO_Central"/>
</dbReference>
<dbReference type="GO" id="GO:1901888">
    <property type="term" value="P:regulation of cell junction assembly"/>
    <property type="evidence" value="ECO:0000315"/>
    <property type="project" value="UniProtKB"/>
</dbReference>
<dbReference type="GO" id="GO:0007165">
    <property type="term" value="P:signal transduction"/>
    <property type="evidence" value="ECO:0000303"/>
    <property type="project" value="ProtInc"/>
</dbReference>
<dbReference type="CDD" id="cd00155">
    <property type="entry name" value="RasGEF"/>
    <property type="match status" value="1"/>
</dbReference>
<dbReference type="CDD" id="cd06224">
    <property type="entry name" value="REM"/>
    <property type="match status" value="1"/>
</dbReference>
<dbReference type="FunFam" id="1.20.870.10:FF:000017">
    <property type="entry name" value="Rap guanine nucleotide exchange factor 1"/>
    <property type="match status" value="1"/>
</dbReference>
<dbReference type="FunFam" id="1.10.840.10:FF:000009">
    <property type="entry name" value="rap guanine nucleotide exchange factor 1"/>
    <property type="match status" value="1"/>
</dbReference>
<dbReference type="Gene3D" id="1.10.840.10">
    <property type="entry name" value="Ras guanine-nucleotide exchange factors catalytic domain"/>
    <property type="match status" value="1"/>
</dbReference>
<dbReference type="Gene3D" id="1.20.870.10">
    <property type="entry name" value="Son of sevenless (SoS) protein Chain: S domain 1"/>
    <property type="match status" value="1"/>
</dbReference>
<dbReference type="InterPro" id="IPR008937">
    <property type="entry name" value="Ras-like_GEF"/>
</dbReference>
<dbReference type="InterPro" id="IPR000651">
    <property type="entry name" value="Ras-like_Gua-exchang_fac_N"/>
</dbReference>
<dbReference type="InterPro" id="IPR019804">
    <property type="entry name" value="Ras_G-nucl-exch_fac_CS"/>
</dbReference>
<dbReference type="InterPro" id="IPR023578">
    <property type="entry name" value="Ras_GEF_dom_sf"/>
</dbReference>
<dbReference type="InterPro" id="IPR001895">
    <property type="entry name" value="RASGEF_cat_dom"/>
</dbReference>
<dbReference type="InterPro" id="IPR036964">
    <property type="entry name" value="RASGEF_cat_dom_sf"/>
</dbReference>
<dbReference type="PANTHER" id="PTHR23113">
    <property type="entry name" value="GUANINE NUCLEOTIDE EXCHANGE FACTOR"/>
    <property type="match status" value="1"/>
</dbReference>
<dbReference type="PANTHER" id="PTHR23113:SF224">
    <property type="entry name" value="RAP GUANINE NUCLEOTIDE EXCHANGE FACTOR 1"/>
    <property type="match status" value="1"/>
</dbReference>
<dbReference type="Pfam" id="PF00617">
    <property type="entry name" value="RasGEF"/>
    <property type="match status" value="1"/>
</dbReference>
<dbReference type="Pfam" id="PF00618">
    <property type="entry name" value="RasGEF_N"/>
    <property type="match status" value="1"/>
</dbReference>
<dbReference type="SMART" id="SM00147">
    <property type="entry name" value="RasGEF"/>
    <property type="match status" value="1"/>
</dbReference>
<dbReference type="SMART" id="SM00229">
    <property type="entry name" value="RasGEFN"/>
    <property type="match status" value="1"/>
</dbReference>
<dbReference type="SUPFAM" id="SSF48366">
    <property type="entry name" value="Ras GEF"/>
    <property type="match status" value="1"/>
</dbReference>
<dbReference type="PROSITE" id="PS00720">
    <property type="entry name" value="RASGEF"/>
    <property type="match status" value="1"/>
</dbReference>
<dbReference type="PROSITE" id="PS50009">
    <property type="entry name" value="RASGEF_CAT"/>
    <property type="match status" value="1"/>
</dbReference>
<dbReference type="PROSITE" id="PS50212">
    <property type="entry name" value="RASGEF_NTER"/>
    <property type="match status" value="1"/>
</dbReference>
<evidence type="ECO:0000255" key="1">
    <source>
        <dbReference type="PROSITE-ProRule" id="PRU00135"/>
    </source>
</evidence>
<evidence type="ECO:0000255" key="2">
    <source>
        <dbReference type="PROSITE-ProRule" id="PRU00168"/>
    </source>
</evidence>
<evidence type="ECO:0000256" key="3">
    <source>
        <dbReference type="SAM" id="MobiDB-lite"/>
    </source>
</evidence>
<evidence type="ECO:0000269" key="4">
    <source>
    </source>
</evidence>
<evidence type="ECO:0000269" key="5">
    <source>
    </source>
</evidence>
<evidence type="ECO:0000269" key="6">
    <source>
    </source>
</evidence>
<evidence type="ECO:0000269" key="7">
    <source>
    </source>
</evidence>
<evidence type="ECO:0000269" key="8">
    <source>
    </source>
</evidence>
<evidence type="ECO:0000269" key="9">
    <source>
    </source>
</evidence>
<evidence type="ECO:0000269" key="10">
    <source>
    </source>
</evidence>
<evidence type="ECO:0000303" key="11">
    <source>
    </source>
</evidence>
<evidence type="ECO:0000303" key="12">
    <source>
    </source>
</evidence>
<evidence type="ECO:0000305" key="13"/>
<evidence type="ECO:0007744" key="14">
    <source>
    </source>
</evidence>
<evidence type="ECO:0007744" key="15">
    <source>
    </source>
</evidence>
<evidence type="ECO:0007744" key="16">
    <source>
    </source>
</evidence>
<evidence type="ECO:0007744" key="17">
    <source>
    </source>
</evidence>
<gene>
    <name type="primary">RAPGEF1</name>
    <name type="synonym">GRF2</name>
</gene>
<sequence>MDTDSQRSHLSSFTMKLMDKFHSPKIKRTPSKKGKPAEVSVKIPEKPVNKEATDRFLPEGYPLPLDLEQQAVEFMSTSAVASRSQRQKNLSWLEEKEKEVVSALRYFKTIVDKMAIDKKVLEMLPGSASKVLEAILPLVQNDPRIQHSSALSSCYSRVYQSLANLIRWSDQVMLEGVNSEDKEMVTTVKGVIKAVLDGVKELVRLTIEKQGRPSPTSPVKPSSPASKPDGPAELPLTDREVEILNKTTGMSQSTELLPDATDEEVAPPKPPLPGIRVVDNSPPPALPPKKRQSAPSPTRVAVVAPMSRATSGSSLPVGINRQDFDVDCYAQRRLSGGSHSYGGESPRLSPCSSIGKLSKSDEQLSSLDRDSGQCSRNTSCETLDHYDPDYEFLQQDLSNADQIPQQTAWNLSPLPESLGESGSPFLGPPFQLPLGGHPQPDGPLAPGQQTDTPPALPEKKRRSAASQTADGSGCRVSYERHPSQYDNISGEDLQSTAPIPSVPYAPFAAILPFQHGGSSAPVEFVGDFTAPESTGDPEKPPPLPEKKNKHMLAYMQLLEDYSEPQPSMFYQTPQNEHIYQQKNKLLMEVYGFSDSFSGVDSVQELAPPPALPPKQRQLEPPAGKDGHPRDPSAVSGVPGKDSRDGSERAPKSPDALESAQSEEEVDELSLIDHNEIMSRLTLKQEGDDGPDVRGGSGDILLVHATETDRKDLVLYCEAFLTTYRTFISPEELIKKLQYRYEKFSPFADTFKKRVSKNTFFVLVRVVDELCLVELTEEILKLLMELVFRLVCNGELSLARVLRKNILDKVDQKKLLRCATSSQPLAARGVAARPGTLHDFHSHEIAEQLTLLDAELFYKIEIPEVLLWAKEQNEEKSPNLTQFTEHFNNMSYWVRSIIMLQEKAQDRERLLLKFIKIMKHLRKLNNFNSYLAILSALDSAPIRRLEWQKQTSEGLAEYCTLIDSSSSFRAYRAALSEVEPPCIPYLGLILQDLTFVHLGNPDYIDGKVNFSKRWQQFNILDSMRCFQQAHYDMRRNDDIINFFNDFSDHLAEEALWELSLKIKPRNITRRKTDREEKT</sequence>
<reference key="1">
    <citation type="journal article" date="1994" name="Proc. Natl. Acad. Sci. U.S.A.">
        <title>C3G, a guanine nucleotide-releasing protein expressed ubiquitously, binds to the Src homology 3 domains of CRK and GRB2/ASH proteins.</title>
        <authorList>
            <person name="Tanaka S."/>
            <person name="Morishita T."/>
            <person name="Hashimoto Y."/>
            <person name="Hattori S."/>
            <person name="Nakamura S."/>
            <person name="Shibuya M."/>
            <person name="Matuoka K."/>
            <person name="Takenawa T."/>
            <person name="Kurata T."/>
            <person name="Nagashima K."/>
            <person name="Matsuda M."/>
        </authorList>
    </citation>
    <scope>NUCLEOTIDE SEQUENCE [MRNA] (ISOFORM LONG)</scope>
    <scope>CHARACTERIZATION</scope>
    <source>
        <tissue>Placenta</tissue>
        <tissue>Spleen</tissue>
    </source>
</reference>
<reference key="2">
    <citation type="journal article" date="1994" name="J. Biol. Chem.">
        <title>Four proline-rich sequences of the guanine-nucleotide exchange factor C3G bind with unique specificity to the first Src homology 3 domain of Crk.</title>
        <authorList>
            <person name="Knudsen B."/>
            <person name="Feller S."/>
            <person name="Hanafusa H."/>
        </authorList>
    </citation>
    <scope>NUCLEOTIDE SEQUENCE [MRNA]</scope>
    <scope>FUNCTION</scope>
    <scope>ALTERNATIVE SPLICING</scope>
</reference>
<reference key="3">
    <citation type="journal article" date="2007" name="BMC Genomics">
        <title>The full-ORF clone resource of the German cDNA consortium.</title>
        <authorList>
            <person name="Bechtel S."/>
            <person name="Rosenfelder H."/>
            <person name="Duda A."/>
            <person name="Schmidt C.P."/>
            <person name="Ernst U."/>
            <person name="Wellenreuther R."/>
            <person name="Mehrle A."/>
            <person name="Schuster C."/>
            <person name="Bahr A."/>
            <person name="Bloecker H."/>
            <person name="Heubner D."/>
            <person name="Hoerlein A."/>
            <person name="Michel G."/>
            <person name="Wedler H."/>
            <person name="Koehrer K."/>
            <person name="Ottenwaelder B."/>
            <person name="Poustka A."/>
            <person name="Wiemann S."/>
            <person name="Schupp I."/>
        </authorList>
    </citation>
    <scope>NUCLEOTIDE SEQUENCE [LARGE SCALE MRNA] (ISOFORM 4)</scope>
    <source>
        <tissue>Testis</tissue>
    </source>
</reference>
<reference key="4">
    <citation type="journal article" date="2004" name="Nature">
        <title>DNA sequence and analysis of human chromosome 9.</title>
        <authorList>
            <person name="Humphray S.J."/>
            <person name="Oliver K."/>
            <person name="Hunt A.R."/>
            <person name="Plumb R.W."/>
            <person name="Loveland J.E."/>
            <person name="Howe K.L."/>
            <person name="Andrews T.D."/>
            <person name="Searle S."/>
            <person name="Hunt S.E."/>
            <person name="Scott C.E."/>
            <person name="Jones M.C."/>
            <person name="Ainscough R."/>
            <person name="Almeida J.P."/>
            <person name="Ambrose K.D."/>
            <person name="Ashwell R.I.S."/>
            <person name="Babbage A.K."/>
            <person name="Babbage S."/>
            <person name="Bagguley C.L."/>
            <person name="Bailey J."/>
            <person name="Banerjee R."/>
            <person name="Barker D.J."/>
            <person name="Barlow K.F."/>
            <person name="Bates K."/>
            <person name="Beasley H."/>
            <person name="Beasley O."/>
            <person name="Bird C.P."/>
            <person name="Bray-Allen S."/>
            <person name="Brown A.J."/>
            <person name="Brown J.Y."/>
            <person name="Burford D."/>
            <person name="Burrill W."/>
            <person name="Burton J."/>
            <person name="Carder C."/>
            <person name="Carter N.P."/>
            <person name="Chapman J.C."/>
            <person name="Chen Y."/>
            <person name="Clarke G."/>
            <person name="Clark S.Y."/>
            <person name="Clee C.M."/>
            <person name="Clegg S."/>
            <person name="Collier R.E."/>
            <person name="Corby N."/>
            <person name="Crosier M."/>
            <person name="Cummings A.T."/>
            <person name="Davies J."/>
            <person name="Dhami P."/>
            <person name="Dunn M."/>
            <person name="Dutta I."/>
            <person name="Dyer L.W."/>
            <person name="Earthrowl M.E."/>
            <person name="Faulkner L."/>
            <person name="Fleming C.J."/>
            <person name="Frankish A."/>
            <person name="Frankland J.A."/>
            <person name="French L."/>
            <person name="Fricker D.G."/>
            <person name="Garner P."/>
            <person name="Garnett J."/>
            <person name="Ghori J."/>
            <person name="Gilbert J.G.R."/>
            <person name="Glison C."/>
            <person name="Grafham D.V."/>
            <person name="Gribble S."/>
            <person name="Griffiths C."/>
            <person name="Griffiths-Jones S."/>
            <person name="Grocock R."/>
            <person name="Guy J."/>
            <person name="Hall R.E."/>
            <person name="Hammond S."/>
            <person name="Harley J.L."/>
            <person name="Harrison E.S.I."/>
            <person name="Hart E.A."/>
            <person name="Heath P.D."/>
            <person name="Henderson C.D."/>
            <person name="Hopkins B.L."/>
            <person name="Howard P.J."/>
            <person name="Howden P.J."/>
            <person name="Huckle E."/>
            <person name="Johnson C."/>
            <person name="Johnson D."/>
            <person name="Joy A.A."/>
            <person name="Kay M."/>
            <person name="Keenan S."/>
            <person name="Kershaw J.K."/>
            <person name="Kimberley A.M."/>
            <person name="King A."/>
            <person name="Knights A."/>
            <person name="Laird G.K."/>
            <person name="Langford C."/>
            <person name="Lawlor S."/>
            <person name="Leongamornlert D.A."/>
            <person name="Leversha M."/>
            <person name="Lloyd C."/>
            <person name="Lloyd D.M."/>
            <person name="Lovell J."/>
            <person name="Martin S."/>
            <person name="Mashreghi-Mohammadi M."/>
            <person name="Matthews L."/>
            <person name="McLaren S."/>
            <person name="McLay K.E."/>
            <person name="McMurray A."/>
            <person name="Milne S."/>
            <person name="Nickerson T."/>
            <person name="Nisbett J."/>
            <person name="Nordsiek G."/>
            <person name="Pearce A.V."/>
            <person name="Peck A.I."/>
            <person name="Porter K.M."/>
            <person name="Pandian R."/>
            <person name="Pelan S."/>
            <person name="Phillimore B."/>
            <person name="Povey S."/>
            <person name="Ramsey Y."/>
            <person name="Rand V."/>
            <person name="Scharfe M."/>
            <person name="Sehra H.K."/>
            <person name="Shownkeen R."/>
            <person name="Sims S.K."/>
            <person name="Skuce C.D."/>
            <person name="Smith M."/>
            <person name="Steward C.A."/>
            <person name="Swarbreck D."/>
            <person name="Sycamore N."/>
            <person name="Tester J."/>
            <person name="Thorpe A."/>
            <person name="Tracey A."/>
            <person name="Tromans A."/>
            <person name="Thomas D.W."/>
            <person name="Wall M."/>
            <person name="Wallis J.M."/>
            <person name="West A.P."/>
            <person name="Whitehead S.L."/>
            <person name="Willey D.L."/>
            <person name="Williams S.A."/>
            <person name="Wilming L."/>
            <person name="Wray P.W."/>
            <person name="Young L."/>
            <person name="Ashurst J.L."/>
            <person name="Coulson A."/>
            <person name="Blocker H."/>
            <person name="Durbin R.M."/>
            <person name="Sulston J.E."/>
            <person name="Hubbard T."/>
            <person name="Jackson M.J."/>
            <person name="Bentley D.R."/>
            <person name="Beck S."/>
            <person name="Rogers J."/>
            <person name="Dunham I."/>
        </authorList>
    </citation>
    <scope>NUCLEOTIDE SEQUENCE [LARGE SCALE GENOMIC DNA]</scope>
</reference>
<reference key="5">
    <citation type="journal article" date="2004" name="Genome Res.">
        <title>The status, quality, and expansion of the NIH full-length cDNA project: the Mammalian Gene Collection (MGC).</title>
        <authorList>
            <consortium name="The MGC Project Team"/>
        </authorList>
    </citation>
    <scope>NUCLEOTIDE SEQUENCE [LARGE SCALE MRNA] (ISOFORM 3)</scope>
    <source>
        <tissue>Skin</tissue>
    </source>
</reference>
<reference key="6">
    <citation type="journal article" date="1996" name="J. Biol. Chem.">
        <title>Interaction between the amino-terminal SH3 domain of CRK and its natural target proteins.</title>
        <authorList>
            <person name="Matsuda M."/>
            <person name="Ota S."/>
            <person name="Tanimura R."/>
            <person name="Nakamura H."/>
            <person name="Matuoka K."/>
            <person name="Takenawa T."/>
            <person name="Nagashima K."/>
            <person name="Kurata T."/>
        </authorList>
    </citation>
    <scope>INTERACTION WITH CRK</scope>
</reference>
<reference key="7">
    <citation type="journal article" date="2002" name="J. Cell Sci.">
        <title>Novel function of Chat in controlling cell adhesion via Cas-Crk-C3G-pathway-mediated Rap1 activation.</title>
        <authorList>
            <person name="Sakakibara A."/>
            <person name="Ohba Y."/>
            <person name="Kurokawa K."/>
            <person name="Matsuda M."/>
            <person name="Hattori S."/>
        </authorList>
    </citation>
    <scope>FUNCTION</scope>
</reference>
<reference key="8">
    <citation type="journal article" date="2003" name="J. Biol. Chem.">
        <title>Physical and functional interaction between Hck tyrosine kinase and guanine nucleotide exchange factor C3G results in apoptosis, which is independent of C3G catalytic domain.</title>
        <authorList>
            <person name="Shivakrupa R."/>
            <person name="Radha V."/>
            <person name="Sudhakar C."/>
            <person name="Swarup G."/>
        </authorList>
    </citation>
    <scope>INTERACTION WITH HCK</scope>
    <scope>MUTAGENESIS OF TYR-504</scope>
    <scope>PHOSPHORYLATION AT TYR-504</scope>
</reference>
<reference key="9">
    <citation type="journal article" date="2004" name="Anal. Chem.">
        <title>Robust phosphoproteomic profiling of tyrosine phosphorylation sites from human T cells using immobilized metal affinity chromatography and tandem mass spectrometry.</title>
        <authorList>
            <person name="Brill L.M."/>
            <person name="Salomon A.R."/>
            <person name="Ficarro S.B."/>
            <person name="Mukherji M."/>
            <person name="Stettler-Gill M."/>
            <person name="Peters E.C."/>
        </authorList>
    </citation>
    <scope>IDENTIFICATION BY MASS SPECTROMETRY [LARGE SCALE ANALYSIS]</scope>
    <source>
        <tissue>Leukemic T-cell</tissue>
    </source>
</reference>
<reference key="10">
    <citation type="journal article" date="2007" name="J. Cell Biol.">
        <title>Rap1-PDZ-GEF1 interacts with a neurotrophin receptor at late endosomes, leading to sustained activation of Rap1 and ERK and neurite outgrowth.</title>
        <authorList>
            <person name="Hisata S."/>
            <person name="Sakisaka T."/>
            <person name="Baba T."/>
            <person name="Yamada T."/>
            <person name="Aoki K."/>
            <person name="Matsuda M."/>
            <person name="Takai Y."/>
        </authorList>
    </citation>
    <scope>FUNCTION</scope>
    <scope>SUBCELLULAR LOCATION</scope>
</reference>
<reference key="11">
    <citation type="journal article" date="2009" name="Sci. Signal.">
        <title>Quantitative phosphoproteomic analysis of T cell receptor signaling reveals system-wide modulation of protein-protein interactions.</title>
        <authorList>
            <person name="Mayya V."/>
            <person name="Lundgren D.H."/>
            <person name="Hwang S.-I."/>
            <person name="Rezaul K."/>
            <person name="Wu L."/>
            <person name="Eng J.K."/>
            <person name="Rodionov V."/>
            <person name="Han D.K."/>
        </authorList>
    </citation>
    <scope>PHOSPHORYLATION [LARGE SCALE ANALYSIS] AT SER-360</scope>
    <scope>IDENTIFICATION BY MASS SPECTROMETRY [LARGE SCALE ANALYSIS]</scope>
    <source>
        <tissue>Leukemic T-cell</tissue>
    </source>
</reference>
<reference key="12">
    <citation type="journal article" date="2011" name="BMC Syst. Biol.">
        <title>Initial characterization of the human central proteome.</title>
        <authorList>
            <person name="Burkard T.R."/>
            <person name="Planyavsky M."/>
            <person name="Kaupe I."/>
            <person name="Breitwieser F.P."/>
            <person name="Buerckstuemmer T."/>
            <person name="Bennett K.L."/>
            <person name="Superti-Furga G."/>
            <person name="Colinge J."/>
        </authorList>
    </citation>
    <scope>IDENTIFICATION BY MASS SPECTROMETRY [LARGE SCALE ANALYSIS]</scope>
</reference>
<reference key="13">
    <citation type="journal article" date="2011" name="Cell. Signal.">
        <title>Epac1 and PDZ-GEF cooperate in Rap1 mediated endothelial junction control.</title>
        <authorList>
            <person name="Pannekoek W.J."/>
            <person name="van Dijk J.J."/>
            <person name="Chan O.Y."/>
            <person name="Huveneers S."/>
            <person name="Linnemann J.R."/>
            <person name="Spanjaard E."/>
            <person name="Brouwer P.M."/>
            <person name="van der Meer A.J."/>
            <person name="Zwartkruis F.J."/>
            <person name="Rehmann H."/>
            <person name="de Rooij J."/>
            <person name="Bos J.L."/>
        </authorList>
    </citation>
    <scope>FUNCTION</scope>
</reference>
<reference key="14">
    <citation type="journal article" date="2011" name="Sci. Signal.">
        <title>System-wide temporal characterization of the proteome and phosphoproteome of human embryonic stem cell differentiation.</title>
        <authorList>
            <person name="Rigbolt K.T."/>
            <person name="Prokhorova T.A."/>
            <person name="Akimov V."/>
            <person name="Henningsen J."/>
            <person name="Johansen P.T."/>
            <person name="Kratchmarova I."/>
            <person name="Kassem M."/>
            <person name="Mann M."/>
            <person name="Olsen J.V."/>
            <person name="Blagoev B."/>
        </authorList>
    </citation>
    <scope>PHOSPHORYLATION [LARGE SCALE ANALYSIS] AT SER-293</scope>
    <scope>IDENTIFICATION BY MASS SPECTROMETRY [LARGE SCALE ANALYSIS]</scope>
</reference>
<reference key="15">
    <citation type="journal article" date="2013" name="J. Proteome Res.">
        <title>Toward a comprehensive characterization of a human cancer cell phosphoproteome.</title>
        <authorList>
            <person name="Zhou H."/>
            <person name="Di Palma S."/>
            <person name="Preisinger C."/>
            <person name="Peng M."/>
            <person name="Polat A.N."/>
            <person name="Heck A.J."/>
            <person name="Mohammed S."/>
        </authorList>
    </citation>
    <scope>PHOSPHORYLATION [LARGE SCALE ANALYSIS] AT SER-281; SER-314; SER-335 AND SER-360</scope>
    <scope>IDENTIFICATION BY MASS SPECTROMETRY [LARGE SCALE ANALYSIS]</scope>
    <source>
        <tissue>Cervix carcinoma</tissue>
        <tissue>Erythroleukemia</tissue>
    </source>
</reference>
<reference key="16">
    <citation type="journal article" date="2014" name="J. Proteomics">
        <title>An enzyme assisted RP-RPLC approach for in-depth analysis of human liver phosphoproteome.</title>
        <authorList>
            <person name="Bian Y."/>
            <person name="Song C."/>
            <person name="Cheng K."/>
            <person name="Dong M."/>
            <person name="Wang F."/>
            <person name="Huang J."/>
            <person name="Sun D."/>
            <person name="Wang L."/>
            <person name="Ye M."/>
            <person name="Zou H."/>
        </authorList>
    </citation>
    <scope>IDENTIFICATION BY MASS SPECTROMETRY [LARGE SCALE ANALYSIS]</scope>
    <source>
        <tissue>Liver</tissue>
    </source>
</reference>
<reference key="17">
    <citation type="journal article" date="2014" name="Nat. Struct. Mol. Biol.">
        <title>Uncovering global SUMOylation signaling networks in a site-specific manner.</title>
        <authorList>
            <person name="Hendriks I.A."/>
            <person name="D'Souza R.C."/>
            <person name="Yang B."/>
            <person name="Verlaan-de Vries M."/>
            <person name="Mann M."/>
            <person name="Vertegaal A.C."/>
        </authorList>
    </citation>
    <scope>SUMOYLATION [LARGE SCALE ANALYSIS] AT LYS-57 (ISOFORM SHORT)</scope>
    <scope>IDENTIFICATION BY MASS SPECTROMETRY [LARGE SCALE ANALYSIS]</scope>
</reference>
<reference key="18">
    <citation type="journal article" date="2012" name="N. Engl. J. Med.">
        <title>Diagnostic exome sequencing in persons with severe intellectual disability.</title>
        <authorList>
            <person name="de Ligt J."/>
            <person name="Willemsen M.H."/>
            <person name="van Bon B.W."/>
            <person name="Kleefstra T."/>
            <person name="Yntema H.G."/>
            <person name="Kroes T."/>
            <person name="Vulto-van Silfhout A.T."/>
            <person name="Koolen D.A."/>
            <person name="de Vries P."/>
            <person name="Gilissen C."/>
            <person name="del Rosario M."/>
            <person name="Hoischen A."/>
            <person name="Scheffer H."/>
            <person name="de Vries B.B."/>
            <person name="Brunner H.G."/>
            <person name="Veltman J.A."/>
            <person name="Vissers L.E."/>
        </authorList>
    </citation>
    <scope>VARIANT GLN-1012</scope>
</reference>
<keyword id="KW-0002">3D-structure</keyword>
<keyword id="KW-0025">Alternative splicing</keyword>
<keyword id="KW-0967">Endosome</keyword>
<keyword id="KW-0344">Guanine-nucleotide releasing factor</keyword>
<keyword id="KW-1017">Isopeptide bond</keyword>
<keyword id="KW-0524">Neurogenesis</keyword>
<keyword id="KW-0597">Phosphoprotein</keyword>
<keyword id="KW-1267">Proteomics identification</keyword>
<keyword id="KW-1185">Reference proteome</keyword>
<keyword id="KW-0729">SH3-binding</keyword>
<keyword id="KW-0832">Ubl conjugation</keyword>